<proteinExistence type="evidence at transcript level"/>
<organism>
    <name type="scientific">Xenopus laevis</name>
    <name type="common">African clawed frog</name>
    <dbReference type="NCBI Taxonomy" id="8355"/>
    <lineage>
        <taxon>Eukaryota</taxon>
        <taxon>Metazoa</taxon>
        <taxon>Chordata</taxon>
        <taxon>Craniata</taxon>
        <taxon>Vertebrata</taxon>
        <taxon>Euteleostomi</taxon>
        <taxon>Amphibia</taxon>
        <taxon>Batrachia</taxon>
        <taxon>Anura</taxon>
        <taxon>Pipoidea</taxon>
        <taxon>Pipidae</taxon>
        <taxon>Xenopodinae</taxon>
        <taxon>Xenopus</taxon>
        <taxon>Xenopus</taxon>
    </lineage>
</organism>
<keyword id="KW-0963">Cytoplasm</keyword>
<keyword id="KW-0539">Nucleus</keyword>
<keyword id="KW-1185">Reference proteome</keyword>
<keyword id="KW-0736">Signalosome</keyword>
<comment type="function">
    <text evidence="1">Component of the COP9 signalosome complex (CSN), a complex involved in various cellular and developmental processes (By similarity). The CSN complex is an essential regulator of the ubiquitin (Ubl) conjugation pathway by mediating the deneddylation of the cullin subunits of E3 ligase complexes, leading to modify the Ubl ligase activity (By similarity).</text>
</comment>
<comment type="subunit">
    <text evidence="1">Component of the CSN complex, probably composed of cops1, cops2, cops3, cops4, cops5, cops6, cops7, cops8 and cops9.</text>
</comment>
<comment type="subcellular location">
    <subcellularLocation>
        <location evidence="1">Cytoplasm</location>
    </subcellularLocation>
    <subcellularLocation>
        <location evidence="1">Nucleus</location>
    </subcellularLocation>
</comment>
<comment type="similarity">
    <text evidence="3">Belongs to the peptidase M67A family. CSN6 subfamily.</text>
</comment>
<comment type="caution">
    <text evidence="3">Although related to the peptidase M67A family, it lacks the JAMM motif that probably constitutes the catalytic center and therefore it probably does not have a protease activity.</text>
</comment>
<accession>Q6NUC2</accession>
<reference key="1">
    <citation type="submission" date="2004-04" db="EMBL/GenBank/DDBJ databases">
        <authorList>
            <consortium name="NIH - Xenopus Gene Collection (XGC) project"/>
        </authorList>
    </citation>
    <scope>NUCLEOTIDE SEQUENCE [LARGE SCALE MRNA]</scope>
    <source>
        <tissue>Ovary</tissue>
    </source>
</reference>
<evidence type="ECO:0000250" key="1">
    <source>
        <dbReference type="UniProtKB" id="Q7L5N1"/>
    </source>
</evidence>
<evidence type="ECO:0000255" key="2">
    <source>
        <dbReference type="PROSITE-ProRule" id="PRU01182"/>
    </source>
</evidence>
<evidence type="ECO:0000305" key="3"/>
<protein>
    <recommendedName>
        <fullName>COP9 signalosome complex subunit 6</fullName>
        <shortName>Signalosome subunit 6</shortName>
    </recommendedName>
</protein>
<feature type="chain" id="PRO_0000194862" description="COP9 signalosome complex subunit 6">
    <location>
        <begin position="1"/>
        <end position="318"/>
    </location>
</feature>
<feature type="domain" description="MPN" evidence="2">
    <location>
        <begin position="32"/>
        <end position="165"/>
    </location>
</feature>
<name>CSN6_XENLA</name>
<sequence length="318" mass="35537">MAAAASNGNGMEVDVAALPSVMAQGVTGSVTVALHPLVILNISDHWIRMRSQEGRPMQVIGALIGKQEGRNIEVMNSFELLSQINDEKITINKEYYYTKEEQFKQVFKDMEFLGWYTTGGTPDPSDIHVHKQVCEIIESPLFLKLNPMTKHTDLPVSVYESVIDIVNGEATMLLAELSYTLATEEAERIGVDHVARMTATGSGENSTVAEHLIAQHSAIKMLHSRVRLILEYVRAAEGGEVPFNHEILREASALCHCLPVLSTDKFKTDFYDQCNDVGLMSYLGTITKTCNTMNQFVNKFNILYDRQGIGRRMRGLFF</sequence>
<dbReference type="EMBL" id="BC068673">
    <property type="protein sequence ID" value="AAH68673.1"/>
    <property type="molecule type" value="mRNA"/>
</dbReference>
<dbReference type="RefSeq" id="NP_001084619.1">
    <property type="nucleotide sequence ID" value="NM_001091150.1"/>
</dbReference>
<dbReference type="SMR" id="Q6NUC2"/>
<dbReference type="BioGRID" id="100997">
    <property type="interactions" value="1"/>
</dbReference>
<dbReference type="DNASU" id="414575"/>
<dbReference type="GeneID" id="414575"/>
<dbReference type="KEGG" id="xla:414575"/>
<dbReference type="AGR" id="Xenbase:XB-GENE-947833"/>
<dbReference type="CTD" id="414575"/>
<dbReference type="Xenbase" id="XB-GENE-947833">
    <property type="gene designation" value="cops6.S"/>
</dbReference>
<dbReference type="OrthoDB" id="1378at2759"/>
<dbReference type="Proteomes" id="UP000186698">
    <property type="component" value="Chromosome 3S"/>
</dbReference>
<dbReference type="Bgee" id="414575">
    <property type="expression patterns" value="Expressed in internal ear and 19 other cell types or tissues"/>
</dbReference>
<dbReference type="GO" id="GO:0008180">
    <property type="term" value="C:COP9 signalosome"/>
    <property type="evidence" value="ECO:0000318"/>
    <property type="project" value="GO_Central"/>
</dbReference>
<dbReference type="GO" id="GO:0005737">
    <property type="term" value="C:cytoplasm"/>
    <property type="evidence" value="ECO:0007669"/>
    <property type="project" value="UniProtKB-SubCell"/>
</dbReference>
<dbReference type="GO" id="GO:0008237">
    <property type="term" value="F:metallopeptidase activity"/>
    <property type="evidence" value="ECO:0007669"/>
    <property type="project" value="InterPro"/>
</dbReference>
<dbReference type="GO" id="GO:0000338">
    <property type="term" value="P:protein deneddylation"/>
    <property type="evidence" value="ECO:0007669"/>
    <property type="project" value="InterPro"/>
</dbReference>
<dbReference type="CDD" id="cd08063">
    <property type="entry name" value="MPN_CSN6"/>
    <property type="match status" value="1"/>
</dbReference>
<dbReference type="FunFam" id="3.40.140.10:FF:000017">
    <property type="entry name" value="COP9 signalosome complex subunit 6"/>
    <property type="match status" value="1"/>
</dbReference>
<dbReference type="Gene3D" id="3.40.140.10">
    <property type="entry name" value="Cytidine Deaminase, domain 2"/>
    <property type="match status" value="1"/>
</dbReference>
<dbReference type="InterPro" id="IPR024969">
    <property type="entry name" value="EIF3F/CSN6-like_C"/>
</dbReference>
<dbReference type="InterPro" id="IPR000555">
    <property type="entry name" value="JAMM/MPN+_dom"/>
</dbReference>
<dbReference type="InterPro" id="IPR037518">
    <property type="entry name" value="MPN"/>
</dbReference>
<dbReference type="InterPro" id="IPR033859">
    <property type="entry name" value="MPN_CSN6"/>
</dbReference>
<dbReference type="PANTHER" id="PTHR10540:SF8">
    <property type="entry name" value="COP9 SIGNALOSOME COMPLEX SUBUNIT 6"/>
    <property type="match status" value="1"/>
</dbReference>
<dbReference type="PANTHER" id="PTHR10540">
    <property type="entry name" value="EUKARYOTIC TRANSLATION INITIATION FACTOR 3 SUBUNIT F-RELATED"/>
    <property type="match status" value="1"/>
</dbReference>
<dbReference type="Pfam" id="PF01398">
    <property type="entry name" value="JAB"/>
    <property type="match status" value="1"/>
</dbReference>
<dbReference type="Pfam" id="PF13012">
    <property type="entry name" value="MitMem_reg"/>
    <property type="match status" value="1"/>
</dbReference>
<dbReference type="SMART" id="SM00232">
    <property type="entry name" value="JAB_MPN"/>
    <property type="match status" value="1"/>
</dbReference>
<dbReference type="PROSITE" id="PS50249">
    <property type="entry name" value="MPN"/>
    <property type="match status" value="1"/>
</dbReference>
<gene>
    <name type="primary">cops6</name>
    <name type="synonym">csn6</name>
</gene>